<feature type="chain" id="PRO_0000050656" description="HTH-type transcriptional repressor NanR">
    <location>
        <begin position="1"/>
        <end position="263"/>
    </location>
</feature>
<feature type="domain" description="HTH gntR-type" evidence="1">
    <location>
        <begin position="30"/>
        <end position="98"/>
    </location>
</feature>
<feature type="DNA-binding region" description="H-T-H motif" evidence="1">
    <location>
        <begin position="58"/>
        <end position="77"/>
    </location>
</feature>
<feature type="region of interest" description="Disordered" evidence="2">
    <location>
        <begin position="1"/>
        <end position="23"/>
    </location>
</feature>
<proteinExistence type="inferred from homology"/>
<evidence type="ECO:0000255" key="1">
    <source>
        <dbReference type="HAMAP-Rule" id="MF_01236"/>
    </source>
</evidence>
<evidence type="ECO:0000256" key="2">
    <source>
        <dbReference type="SAM" id="MobiDB-lite"/>
    </source>
</evidence>
<name>NANR_ECOL6</name>
<accession>Q8FD57</accession>
<keyword id="KW-0238">DNA-binding</keyword>
<keyword id="KW-1185">Reference proteome</keyword>
<keyword id="KW-0678">Repressor</keyword>
<keyword id="KW-0804">Transcription</keyword>
<keyword id="KW-0805">Transcription regulation</keyword>
<comment type="function">
    <text evidence="1">Transcriptional repressor that controls expression of the genes required for the catabolism of sialic acids.</text>
</comment>
<comment type="similarity">
    <text evidence="1">Belongs to the NanR family.</text>
</comment>
<organism>
    <name type="scientific">Escherichia coli O6:H1 (strain CFT073 / ATCC 700928 / UPEC)</name>
    <dbReference type="NCBI Taxonomy" id="199310"/>
    <lineage>
        <taxon>Bacteria</taxon>
        <taxon>Pseudomonadati</taxon>
        <taxon>Pseudomonadota</taxon>
        <taxon>Gammaproteobacteria</taxon>
        <taxon>Enterobacterales</taxon>
        <taxon>Enterobacteriaceae</taxon>
        <taxon>Escherichia</taxon>
    </lineage>
</organism>
<reference key="1">
    <citation type="journal article" date="2002" name="Proc. Natl. Acad. Sci. U.S.A.">
        <title>Extensive mosaic structure revealed by the complete genome sequence of uropathogenic Escherichia coli.</title>
        <authorList>
            <person name="Welch R.A."/>
            <person name="Burland V."/>
            <person name="Plunkett G. III"/>
            <person name="Redford P."/>
            <person name="Roesch P."/>
            <person name="Rasko D."/>
            <person name="Buckles E.L."/>
            <person name="Liou S.-R."/>
            <person name="Boutin A."/>
            <person name="Hackett J."/>
            <person name="Stroud D."/>
            <person name="Mayhew G.F."/>
            <person name="Rose D.J."/>
            <person name="Zhou S."/>
            <person name="Schwartz D.C."/>
            <person name="Perna N.T."/>
            <person name="Mobley H.L.T."/>
            <person name="Donnenberg M.S."/>
            <person name="Blattner F.R."/>
        </authorList>
    </citation>
    <scope>NUCLEOTIDE SEQUENCE [LARGE SCALE GENOMIC DNA]</scope>
    <source>
        <strain>CFT073 / ATCC 700928 / UPEC</strain>
    </source>
</reference>
<dbReference type="EMBL" id="AE014075">
    <property type="protein sequence ID" value="AAN82420.1"/>
    <property type="molecule type" value="Genomic_DNA"/>
</dbReference>
<dbReference type="RefSeq" id="WP_000074795.1">
    <property type="nucleotide sequence ID" value="NZ_CP051263.1"/>
</dbReference>
<dbReference type="SMR" id="Q8FD57"/>
<dbReference type="STRING" id="199310.c3980"/>
<dbReference type="KEGG" id="ecc:c3980"/>
<dbReference type="eggNOG" id="COG2186">
    <property type="taxonomic scope" value="Bacteria"/>
</dbReference>
<dbReference type="HOGENOM" id="CLU_017584_9_1_6"/>
<dbReference type="BioCyc" id="ECOL199310:C3980-MONOMER"/>
<dbReference type="Proteomes" id="UP000001410">
    <property type="component" value="Chromosome"/>
</dbReference>
<dbReference type="GO" id="GO:0003677">
    <property type="term" value="F:DNA binding"/>
    <property type="evidence" value="ECO:0007669"/>
    <property type="project" value="UniProtKB-KW"/>
</dbReference>
<dbReference type="GO" id="GO:0003700">
    <property type="term" value="F:DNA-binding transcription factor activity"/>
    <property type="evidence" value="ECO:0007669"/>
    <property type="project" value="UniProtKB-UniRule"/>
</dbReference>
<dbReference type="GO" id="GO:0045892">
    <property type="term" value="P:negative regulation of DNA-templated transcription"/>
    <property type="evidence" value="ECO:0007669"/>
    <property type="project" value="UniProtKB-UniRule"/>
</dbReference>
<dbReference type="CDD" id="cd07377">
    <property type="entry name" value="WHTH_GntR"/>
    <property type="match status" value="1"/>
</dbReference>
<dbReference type="FunFam" id="1.10.10.10:FF:000150">
    <property type="entry name" value="HTH-type transcriptional repressor NanR"/>
    <property type="match status" value="1"/>
</dbReference>
<dbReference type="FunFam" id="1.20.120.530:FF:000006">
    <property type="entry name" value="HTH-type transcriptional repressor NanR"/>
    <property type="match status" value="1"/>
</dbReference>
<dbReference type="Gene3D" id="1.20.120.530">
    <property type="entry name" value="GntR ligand-binding domain-like"/>
    <property type="match status" value="1"/>
</dbReference>
<dbReference type="Gene3D" id="1.10.10.10">
    <property type="entry name" value="Winged helix-like DNA-binding domain superfamily/Winged helix DNA-binding domain"/>
    <property type="match status" value="1"/>
</dbReference>
<dbReference type="HAMAP" id="MF_01236">
    <property type="entry name" value="HTH_NanR"/>
    <property type="match status" value="1"/>
</dbReference>
<dbReference type="InterPro" id="IPR011711">
    <property type="entry name" value="GntR_C"/>
</dbReference>
<dbReference type="InterPro" id="IPR008920">
    <property type="entry name" value="TF_FadR/GntR_C"/>
</dbReference>
<dbReference type="InterPro" id="IPR000524">
    <property type="entry name" value="Tscrpt_reg_HTH_GntR"/>
</dbReference>
<dbReference type="InterPro" id="IPR023730">
    <property type="entry name" value="Tscrpt_reg_NanR"/>
</dbReference>
<dbReference type="InterPro" id="IPR036388">
    <property type="entry name" value="WH-like_DNA-bd_sf"/>
</dbReference>
<dbReference type="InterPro" id="IPR036390">
    <property type="entry name" value="WH_DNA-bd_sf"/>
</dbReference>
<dbReference type="NCBIfam" id="NF003011">
    <property type="entry name" value="PRK03837.1"/>
    <property type="match status" value="1"/>
</dbReference>
<dbReference type="PANTHER" id="PTHR43537:SF53">
    <property type="entry name" value="HTH-TYPE TRANSCRIPTIONAL REPRESSOR NANR"/>
    <property type="match status" value="1"/>
</dbReference>
<dbReference type="PANTHER" id="PTHR43537">
    <property type="entry name" value="TRANSCRIPTIONAL REGULATOR, GNTR FAMILY"/>
    <property type="match status" value="1"/>
</dbReference>
<dbReference type="Pfam" id="PF07729">
    <property type="entry name" value="FCD"/>
    <property type="match status" value="1"/>
</dbReference>
<dbReference type="Pfam" id="PF00392">
    <property type="entry name" value="GntR"/>
    <property type="match status" value="1"/>
</dbReference>
<dbReference type="PRINTS" id="PR00035">
    <property type="entry name" value="HTHGNTR"/>
</dbReference>
<dbReference type="SMART" id="SM00895">
    <property type="entry name" value="FCD"/>
    <property type="match status" value="1"/>
</dbReference>
<dbReference type="SMART" id="SM00345">
    <property type="entry name" value="HTH_GNTR"/>
    <property type="match status" value="1"/>
</dbReference>
<dbReference type="SUPFAM" id="SSF48008">
    <property type="entry name" value="GntR ligand-binding domain-like"/>
    <property type="match status" value="1"/>
</dbReference>
<dbReference type="SUPFAM" id="SSF46785">
    <property type="entry name" value="Winged helix' DNA-binding domain"/>
    <property type="match status" value="1"/>
</dbReference>
<dbReference type="PROSITE" id="PS50949">
    <property type="entry name" value="HTH_GNTR"/>
    <property type="match status" value="1"/>
</dbReference>
<sequence length="263" mass="29536">MSPMNAFDPQAEDSTTTIGRNLRSRPLARKKLSEMVEEELEQMIRRREFGEGEQLPSERELMAFFNVGRPSVREALAALKRKGLVQINNGERARVSRPSADTIIGELSGMAKDFLSHPGGIAHFEQLRLFFESSLVRYAAEHATDEQIDLLAKALEINSQSLDNNAAFIRSDVDFHRVLAEIPGNPIFMAIHVALLDWLIAARPTVADQALHEHNNVSYQQHIAIVDAIRRHDPDEADRALQSHLNSVSATWHAFGQTTNKKK</sequence>
<protein>
    <recommendedName>
        <fullName evidence="1">HTH-type transcriptional repressor NanR</fullName>
    </recommendedName>
</protein>
<gene>
    <name evidence="1" type="primary">nanR</name>
    <name type="ordered locus">c3980</name>
</gene>